<accession>Q3J7H0</accession>
<reference key="1">
    <citation type="journal article" date="2006" name="Appl. Environ. Microbiol.">
        <title>Complete genome sequence of the marine, chemolithoautotrophic, ammonia-oxidizing bacterium Nitrosococcus oceani ATCC 19707.</title>
        <authorList>
            <person name="Klotz M.G."/>
            <person name="Arp D.J."/>
            <person name="Chain P.S.G."/>
            <person name="El-Sheikh A.F."/>
            <person name="Hauser L.J."/>
            <person name="Hommes N.G."/>
            <person name="Larimer F.W."/>
            <person name="Malfatti S.A."/>
            <person name="Norton J.M."/>
            <person name="Poret-Peterson A.T."/>
            <person name="Vergez L.M."/>
            <person name="Ward B.B."/>
        </authorList>
    </citation>
    <scope>NUCLEOTIDE SEQUENCE [LARGE SCALE GENOMIC DNA]</scope>
    <source>
        <strain>ATCC 19707 / BCRC 17464 / JCM 30415 / NCIMB 11848 / C-107</strain>
    </source>
</reference>
<gene>
    <name evidence="1" type="primary">hisG</name>
    <name type="ordered locus">Noc_2779</name>
</gene>
<proteinExistence type="inferred from homology"/>
<protein>
    <recommendedName>
        <fullName evidence="1">ATP phosphoribosyltransferase</fullName>
        <shortName evidence="1">ATP-PRT</shortName>
        <shortName evidence="1">ATP-PRTase</shortName>
        <ecNumber evidence="1">2.4.2.17</ecNumber>
    </recommendedName>
</protein>
<feature type="chain" id="PRO_0000229321" description="ATP phosphoribosyltransferase">
    <location>
        <begin position="1"/>
        <end position="213"/>
    </location>
</feature>
<name>HIS1_NITOC</name>
<comment type="function">
    <text evidence="1">Catalyzes the condensation of ATP and 5-phosphoribose 1-diphosphate to form N'-(5'-phosphoribosyl)-ATP (PR-ATP). Has a crucial role in the pathway because the rate of histidine biosynthesis seems to be controlled primarily by regulation of HisG enzymatic activity.</text>
</comment>
<comment type="catalytic activity">
    <reaction evidence="1">
        <text>1-(5-phospho-beta-D-ribosyl)-ATP + diphosphate = 5-phospho-alpha-D-ribose 1-diphosphate + ATP</text>
        <dbReference type="Rhea" id="RHEA:18473"/>
        <dbReference type="ChEBI" id="CHEBI:30616"/>
        <dbReference type="ChEBI" id="CHEBI:33019"/>
        <dbReference type="ChEBI" id="CHEBI:58017"/>
        <dbReference type="ChEBI" id="CHEBI:73183"/>
        <dbReference type="EC" id="2.4.2.17"/>
    </reaction>
</comment>
<comment type="pathway">
    <text evidence="1">Amino-acid biosynthesis; L-histidine biosynthesis; L-histidine from 5-phospho-alpha-D-ribose 1-diphosphate: step 1/9.</text>
</comment>
<comment type="subunit">
    <text evidence="1">Heteromultimer composed of HisG and HisZ subunits.</text>
</comment>
<comment type="subcellular location">
    <subcellularLocation>
        <location evidence="1">Cytoplasm</location>
    </subcellularLocation>
</comment>
<comment type="domain">
    <text>Lacks the C-terminal regulatory region which is replaced by HisZ.</text>
</comment>
<comment type="similarity">
    <text evidence="1">Belongs to the ATP phosphoribosyltransferase family. Short subfamily.</text>
</comment>
<evidence type="ECO:0000255" key="1">
    <source>
        <dbReference type="HAMAP-Rule" id="MF_01018"/>
    </source>
</evidence>
<dbReference type="EC" id="2.4.2.17" evidence="1"/>
<dbReference type="EMBL" id="CP000127">
    <property type="protein sequence ID" value="ABA59226.1"/>
    <property type="molecule type" value="Genomic_DNA"/>
</dbReference>
<dbReference type="RefSeq" id="WP_002814176.1">
    <property type="nucleotide sequence ID" value="NC_007484.1"/>
</dbReference>
<dbReference type="SMR" id="Q3J7H0"/>
<dbReference type="FunCoup" id="Q3J7H0">
    <property type="interactions" value="472"/>
</dbReference>
<dbReference type="STRING" id="323261.Noc_2779"/>
<dbReference type="KEGG" id="noc:Noc_2779"/>
<dbReference type="eggNOG" id="COG0040">
    <property type="taxonomic scope" value="Bacteria"/>
</dbReference>
<dbReference type="HOGENOM" id="CLU_038115_2_0_6"/>
<dbReference type="InParanoid" id="Q3J7H0"/>
<dbReference type="UniPathway" id="UPA00031">
    <property type="reaction ID" value="UER00006"/>
</dbReference>
<dbReference type="Proteomes" id="UP000006838">
    <property type="component" value="Chromosome"/>
</dbReference>
<dbReference type="GO" id="GO:0005737">
    <property type="term" value="C:cytoplasm"/>
    <property type="evidence" value="ECO:0007669"/>
    <property type="project" value="UniProtKB-SubCell"/>
</dbReference>
<dbReference type="GO" id="GO:0005524">
    <property type="term" value="F:ATP binding"/>
    <property type="evidence" value="ECO:0007669"/>
    <property type="project" value="UniProtKB-KW"/>
</dbReference>
<dbReference type="GO" id="GO:0003879">
    <property type="term" value="F:ATP phosphoribosyltransferase activity"/>
    <property type="evidence" value="ECO:0007669"/>
    <property type="project" value="UniProtKB-UniRule"/>
</dbReference>
<dbReference type="GO" id="GO:0000105">
    <property type="term" value="P:L-histidine biosynthetic process"/>
    <property type="evidence" value="ECO:0007669"/>
    <property type="project" value="UniProtKB-UniRule"/>
</dbReference>
<dbReference type="CDD" id="cd13595">
    <property type="entry name" value="PBP2_HisGs"/>
    <property type="match status" value="1"/>
</dbReference>
<dbReference type="FunFam" id="3.40.190.10:FF:000008">
    <property type="entry name" value="ATP phosphoribosyltransferase"/>
    <property type="match status" value="1"/>
</dbReference>
<dbReference type="FunFam" id="3.40.190.10:FF:000011">
    <property type="entry name" value="ATP phosphoribosyltransferase"/>
    <property type="match status" value="1"/>
</dbReference>
<dbReference type="Gene3D" id="3.40.190.10">
    <property type="entry name" value="Periplasmic binding protein-like II"/>
    <property type="match status" value="2"/>
</dbReference>
<dbReference type="HAMAP" id="MF_01018">
    <property type="entry name" value="HisG_Short"/>
    <property type="match status" value="1"/>
</dbReference>
<dbReference type="InterPro" id="IPR013820">
    <property type="entry name" value="ATP_PRibTrfase_cat"/>
</dbReference>
<dbReference type="InterPro" id="IPR018198">
    <property type="entry name" value="ATP_PRibTrfase_CS"/>
</dbReference>
<dbReference type="InterPro" id="IPR001348">
    <property type="entry name" value="ATP_PRibTrfase_HisG"/>
</dbReference>
<dbReference type="InterPro" id="IPR024893">
    <property type="entry name" value="ATP_PRibTrfase_HisG_short"/>
</dbReference>
<dbReference type="NCBIfam" id="TIGR00070">
    <property type="entry name" value="hisG"/>
    <property type="match status" value="1"/>
</dbReference>
<dbReference type="PANTHER" id="PTHR21403:SF8">
    <property type="entry name" value="ATP PHOSPHORIBOSYLTRANSFERASE"/>
    <property type="match status" value="1"/>
</dbReference>
<dbReference type="PANTHER" id="PTHR21403">
    <property type="entry name" value="ATP PHOSPHORIBOSYLTRANSFERASE ATP-PRTASE"/>
    <property type="match status" value="1"/>
</dbReference>
<dbReference type="Pfam" id="PF01634">
    <property type="entry name" value="HisG"/>
    <property type="match status" value="1"/>
</dbReference>
<dbReference type="SUPFAM" id="SSF53850">
    <property type="entry name" value="Periplasmic binding protein-like II"/>
    <property type="match status" value="1"/>
</dbReference>
<dbReference type="PROSITE" id="PS01316">
    <property type="entry name" value="ATP_P_PHORIBOSYLTR"/>
    <property type="match status" value="1"/>
</dbReference>
<sequence length="213" mass="23647">MVEPLKLALSKGRIFQEILPLLAIAGIYPRDDPKTSRKLVLDTNQADLKLVIIRAADVPTYVEYGAADFGVAGKDVLLEHPGNGLYEPLDLRIACCRMMVAGEPEVTPRSGRLRIATKYVHSTRRFYAERGEQVEVIKLYGSMELAPLVGLADRIVDLVDTGNTLRANGLAPLEHITDISSRLVVNKASMKMRHQRIKKFICLMAEAVEKQHG</sequence>
<keyword id="KW-0028">Amino-acid biosynthesis</keyword>
<keyword id="KW-0067">ATP-binding</keyword>
<keyword id="KW-0963">Cytoplasm</keyword>
<keyword id="KW-0328">Glycosyltransferase</keyword>
<keyword id="KW-0368">Histidine biosynthesis</keyword>
<keyword id="KW-0547">Nucleotide-binding</keyword>
<keyword id="KW-1185">Reference proteome</keyword>
<keyword id="KW-0808">Transferase</keyword>
<organism>
    <name type="scientific">Nitrosococcus oceani (strain ATCC 19707 / BCRC 17464 / JCM 30415 / NCIMB 11848 / C-107)</name>
    <dbReference type="NCBI Taxonomy" id="323261"/>
    <lineage>
        <taxon>Bacteria</taxon>
        <taxon>Pseudomonadati</taxon>
        <taxon>Pseudomonadota</taxon>
        <taxon>Gammaproteobacteria</taxon>
        <taxon>Chromatiales</taxon>
        <taxon>Chromatiaceae</taxon>
        <taxon>Nitrosococcus</taxon>
    </lineage>
</organism>